<gene>
    <name evidence="1" type="primary">rpsJ</name>
    <name type="ordered locus">RSKD131_0013</name>
</gene>
<reference key="1">
    <citation type="journal article" date="2009" name="J. Bacteriol.">
        <title>Complete genome sequence of Rhodobacter sphaeroides KD131.</title>
        <authorList>
            <person name="Lim S.-K."/>
            <person name="Kim S.J."/>
            <person name="Cha S.H."/>
            <person name="Oh Y.-K."/>
            <person name="Rhee H.-J."/>
            <person name="Kim M.-S."/>
            <person name="Lee J.K."/>
        </authorList>
    </citation>
    <scope>NUCLEOTIDE SEQUENCE [LARGE SCALE GENOMIC DNA]</scope>
    <source>
        <strain>KD131 / KCTC 12085</strain>
    </source>
</reference>
<accession>B9KL90</accession>
<name>RS10_CERSK</name>
<keyword id="KW-0687">Ribonucleoprotein</keyword>
<keyword id="KW-0689">Ribosomal protein</keyword>
<dbReference type="EMBL" id="CP001150">
    <property type="protein sequence ID" value="ACL99872.1"/>
    <property type="molecule type" value="Genomic_DNA"/>
</dbReference>
<dbReference type="RefSeq" id="WP_002722490.1">
    <property type="nucleotide sequence ID" value="NC_011963.1"/>
</dbReference>
<dbReference type="SMR" id="B9KL90"/>
<dbReference type="GeneID" id="67445499"/>
<dbReference type="KEGG" id="rsk:RSKD131_0013"/>
<dbReference type="HOGENOM" id="CLU_122625_1_3_5"/>
<dbReference type="GO" id="GO:1990904">
    <property type="term" value="C:ribonucleoprotein complex"/>
    <property type="evidence" value="ECO:0007669"/>
    <property type="project" value="UniProtKB-KW"/>
</dbReference>
<dbReference type="GO" id="GO:0005840">
    <property type="term" value="C:ribosome"/>
    <property type="evidence" value="ECO:0007669"/>
    <property type="project" value="UniProtKB-KW"/>
</dbReference>
<dbReference type="GO" id="GO:0003735">
    <property type="term" value="F:structural constituent of ribosome"/>
    <property type="evidence" value="ECO:0007669"/>
    <property type="project" value="InterPro"/>
</dbReference>
<dbReference type="GO" id="GO:0000049">
    <property type="term" value="F:tRNA binding"/>
    <property type="evidence" value="ECO:0007669"/>
    <property type="project" value="UniProtKB-UniRule"/>
</dbReference>
<dbReference type="GO" id="GO:0006412">
    <property type="term" value="P:translation"/>
    <property type="evidence" value="ECO:0007669"/>
    <property type="project" value="UniProtKB-UniRule"/>
</dbReference>
<dbReference type="FunFam" id="3.30.70.600:FF:000001">
    <property type="entry name" value="30S ribosomal protein S10"/>
    <property type="match status" value="1"/>
</dbReference>
<dbReference type="Gene3D" id="3.30.70.600">
    <property type="entry name" value="Ribosomal protein S10 domain"/>
    <property type="match status" value="1"/>
</dbReference>
<dbReference type="HAMAP" id="MF_00508">
    <property type="entry name" value="Ribosomal_uS10"/>
    <property type="match status" value="1"/>
</dbReference>
<dbReference type="InterPro" id="IPR001848">
    <property type="entry name" value="Ribosomal_uS10"/>
</dbReference>
<dbReference type="InterPro" id="IPR027486">
    <property type="entry name" value="Ribosomal_uS10_dom"/>
</dbReference>
<dbReference type="InterPro" id="IPR036838">
    <property type="entry name" value="Ribosomal_uS10_dom_sf"/>
</dbReference>
<dbReference type="NCBIfam" id="NF001861">
    <property type="entry name" value="PRK00596.1"/>
    <property type="match status" value="1"/>
</dbReference>
<dbReference type="NCBIfam" id="TIGR01049">
    <property type="entry name" value="rpsJ_bact"/>
    <property type="match status" value="1"/>
</dbReference>
<dbReference type="PANTHER" id="PTHR11700">
    <property type="entry name" value="30S RIBOSOMAL PROTEIN S10 FAMILY MEMBER"/>
    <property type="match status" value="1"/>
</dbReference>
<dbReference type="Pfam" id="PF00338">
    <property type="entry name" value="Ribosomal_S10"/>
    <property type="match status" value="1"/>
</dbReference>
<dbReference type="PRINTS" id="PR00971">
    <property type="entry name" value="RIBOSOMALS10"/>
</dbReference>
<dbReference type="SMART" id="SM01403">
    <property type="entry name" value="Ribosomal_S10"/>
    <property type="match status" value="1"/>
</dbReference>
<dbReference type="SUPFAM" id="SSF54999">
    <property type="entry name" value="Ribosomal protein S10"/>
    <property type="match status" value="1"/>
</dbReference>
<proteinExistence type="inferred from homology"/>
<sequence length="102" mass="11598">MQGQTIRIRLKAFDYRVLDASTQEIVNTAKRTGAQVRGPIPLPNKIEKFTVLRGPHIDKKSRDQWEIRTHKRLLDIVDPTPQTVDALMKLDLAAGVDIQIKV</sequence>
<evidence type="ECO:0000255" key="1">
    <source>
        <dbReference type="HAMAP-Rule" id="MF_00508"/>
    </source>
</evidence>
<evidence type="ECO:0000305" key="2"/>
<organism>
    <name type="scientific">Cereibacter sphaeroides (strain KD131 / KCTC 12085)</name>
    <name type="common">Rhodobacter sphaeroides</name>
    <dbReference type="NCBI Taxonomy" id="557760"/>
    <lineage>
        <taxon>Bacteria</taxon>
        <taxon>Pseudomonadati</taxon>
        <taxon>Pseudomonadota</taxon>
        <taxon>Alphaproteobacteria</taxon>
        <taxon>Rhodobacterales</taxon>
        <taxon>Paracoccaceae</taxon>
        <taxon>Cereibacter</taxon>
    </lineage>
</organism>
<protein>
    <recommendedName>
        <fullName evidence="1">Small ribosomal subunit protein uS10</fullName>
    </recommendedName>
    <alternativeName>
        <fullName evidence="2">30S ribosomal protein S10</fullName>
    </alternativeName>
</protein>
<feature type="chain" id="PRO_1000146073" description="Small ribosomal subunit protein uS10">
    <location>
        <begin position="1"/>
        <end position="102"/>
    </location>
</feature>
<comment type="function">
    <text evidence="1">Involved in the binding of tRNA to the ribosomes.</text>
</comment>
<comment type="subunit">
    <text evidence="1">Part of the 30S ribosomal subunit.</text>
</comment>
<comment type="similarity">
    <text evidence="1">Belongs to the universal ribosomal protein uS10 family.</text>
</comment>